<dbReference type="EC" id="1.14.12.-"/>
<dbReference type="EMBL" id="M64747">
    <property type="protein sequence ID" value="AAA26048.1"/>
    <property type="molecule type" value="Genomic_DNA"/>
</dbReference>
<dbReference type="PIR" id="B41659">
    <property type="entry name" value="B41659"/>
</dbReference>
<dbReference type="RefSeq" id="NP_542870.1">
    <property type="nucleotide sequence ID" value="NC_003350.1"/>
</dbReference>
<dbReference type="SMR" id="P23100"/>
<dbReference type="KEGG" id="ag:AAA26048"/>
<dbReference type="BioCyc" id="MetaCyc:MONOMER-2962"/>
<dbReference type="UniPathway" id="UPA00273"/>
<dbReference type="GO" id="GO:0051213">
    <property type="term" value="F:dioxygenase activity"/>
    <property type="evidence" value="ECO:0007669"/>
    <property type="project" value="UniProtKB-KW"/>
</dbReference>
<dbReference type="GO" id="GO:0019380">
    <property type="term" value="P:3-phenylpropionate catabolic process"/>
    <property type="evidence" value="ECO:0007669"/>
    <property type="project" value="TreeGrafter"/>
</dbReference>
<dbReference type="GO" id="GO:0042203">
    <property type="term" value="P:toluene catabolic process"/>
    <property type="evidence" value="ECO:0007669"/>
    <property type="project" value="UniProtKB-UniPathway"/>
</dbReference>
<dbReference type="CDD" id="cd00667">
    <property type="entry name" value="ring_hydroxylating_dioxygenases_beta"/>
    <property type="match status" value="1"/>
</dbReference>
<dbReference type="Gene3D" id="3.10.450.50">
    <property type="match status" value="1"/>
</dbReference>
<dbReference type="InterPro" id="IPR017641">
    <property type="entry name" value="Benzo_1-2-diOase_ssu"/>
</dbReference>
<dbReference type="InterPro" id="IPR032710">
    <property type="entry name" value="NTF2-like_dom_sf"/>
</dbReference>
<dbReference type="InterPro" id="IPR000391">
    <property type="entry name" value="Rng_hydr_dOase-bsu"/>
</dbReference>
<dbReference type="NCBIfam" id="TIGR03232">
    <property type="entry name" value="benzo_1_2_benB"/>
    <property type="match status" value="1"/>
</dbReference>
<dbReference type="PANTHER" id="PTHR41534">
    <property type="entry name" value="BLR3401 PROTEIN"/>
    <property type="match status" value="1"/>
</dbReference>
<dbReference type="PANTHER" id="PTHR41534:SF1">
    <property type="entry name" value="BLR3401 PROTEIN"/>
    <property type="match status" value="1"/>
</dbReference>
<dbReference type="Pfam" id="PF00866">
    <property type="entry name" value="Ring_hydroxyl_B"/>
    <property type="match status" value="1"/>
</dbReference>
<dbReference type="SUPFAM" id="SSF54427">
    <property type="entry name" value="NTF2-like"/>
    <property type="match status" value="1"/>
</dbReference>
<proteinExistence type="inferred from homology"/>
<accession>P23100</accession>
<name>XYLY_PSEPU</name>
<feature type="chain" id="PRO_0000085076" description="Toluate 1,2-dioxygenase subunit beta">
    <location>
        <begin position="1"/>
        <end position="162"/>
    </location>
</feature>
<evidence type="ECO:0000305" key="1"/>
<geneLocation type="plasmid">
    <name>TOL pWW0</name>
</geneLocation>
<protein>
    <recommendedName>
        <fullName>Toluate 1,2-dioxygenase subunit beta</fullName>
        <ecNumber>1.14.12.-</ecNumber>
    </recommendedName>
</protein>
<reference key="1">
    <citation type="journal article" date="1991" name="J. Bacteriol.">
        <title>Potential DNA slippage structures acquired during evolutionary divergence of Acinetobacter calcoaceticus chromosomal benABC and Pseudomonas putida TOL pWW0 plasmid xylXYZ, genes encoding benzoate dioxygenases.</title>
        <authorList>
            <person name="Harayama S."/>
            <person name="Rekik M."/>
            <person name="Bairoch A."/>
            <person name="Neidle E.L."/>
            <person name="Ornston L.N."/>
        </authorList>
    </citation>
    <scope>NUCLEOTIDE SEQUENCE [GENOMIC DNA]</scope>
</reference>
<organism>
    <name type="scientific">Pseudomonas putida</name>
    <name type="common">Arthrobacter siderocapsulatus</name>
    <dbReference type="NCBI Taxonomy" id="303"/>
    <lineage>
        <taxon>Bacteria</taxon>
        <taxon>Pseudomonadati</taxon>
        <taxon>Pseudomonadota</taxon>
        <taxon>Gammaproteobacteria</taxon>
        <taxon>Pseudomonadales</taxon>
        <taxon>Pseudomonadaceae</taxon>
        <taxon>Pseudomonas</taxon>
    </lineage>
</organism>
<sequence length="162" mass="19326">MTISYEAVRDFLYREARYLDDKQWESWLEMYAPDATFWMPAWDDRDQLTEDPQSQISLIWYGNRSGLEDRVFRIKTERSSATIPDTRTSHNISNLELLEQSDGVCKLRYNWHTMNYRYKTVDHFFGTNFCTLDTCGETPLITAKKVVLKNDYIRQVIDVYHV</sequence>
<gene>
    <name type="primary">xylY</name>
</gene>
<comment type="pathway">
    <text>Xenobiotic degradation; toluene degradation.</text>
</comment>
<comment type="subunit">
    <text>This dioxygenase system consists of three proteins: the two subunits of the hydroxylase component (XylX and XylY), and an electron transfer component (XylZ).</text>
</comment>
<comment type="similarity">
    <text evidence="1">Belongs to the bacterial ring-hydroxylating dioxygenase beta subunit family.</text>
</comment>
<keyword id="KW-0058">Aromatic hydrocarbons catabolism</keyword>
<keyword id="KW-0223">Dioxygenase</keyword>
<keyword id="KW-0520">NAD</keyword>
<keyword id="KW-0560">Oxidoreductase</keyword>
<keyword id="KW-0614">Plasmid</keyword>